<protein>
    <recommendedName>
        <fullName>Small integral membrane protein 7</fullName>
    </recommendedName>
</protein>
<comment type="subcellular location">
    <subcellularLocation>
        <location evidence="2">Membrane</location>
        <topology evidence="2">Single-pass type I membrane protein</topology>
    </subcellularLocation>
</comment>
<comment type="similarity">
    <text evidence="2">Belongs to the SMIM7 family.</text>
</comment>
<gene>
    <name type="primary">SMIM7</name>
    <name type="synonym">C19orf42</name>
</gene>
<reference key="1">
    <citation type="journal article" date="2004" name="Nat. Genet.">
        <title>Complete sequencing and characterization of 21,243 full-length human cDNAs.</title>
        <authorList>
            <person name="Ota T."/>
            <person name="Suzuki Y."/>
            <person name="Nishikawa T."/>
            <person name="Otsuki T."/>
            <person name="Sugiyama T."/>
            <person name="Irie R."/>
            <person name="Wakamatsu A."/>
            <person name="Hayashi K."/>
            <person name="Sato H."/>
            <person name="Nagai K."/>
            <person name="Kimura K."/>
            <person name="Makita H."/>
            <person name="Sekine M."/>
            <person name="Obayashi M."/>
            <person name="Nishi T."/>
            <person name="Shibahara T."/>
            <person name="Tanaka T."/>
            <person name="Ishii S."/>
            <person name="Yamamoto J."/>
            <person name="Saito K."/>
            <person name="Kawai Y."/>
            <person name="Isono Y."/>
            <person name="Nakamura Y."/>
            <person name="Nagahari K."/>
            <person name="Murakami K."/>
            <person name="Yasuda T."/>
            <person name="Iwayanagi T."/>
            <person name="Wagatsuma M."/>
            <person name="Shiratori A."/>
            <person name="Sudo H."/>
            <person name="Hosoiri T."/>
            <person name="Kaku Y."/>
            <person name="Kodaira H."/>
            <person name="Kondo H."/>
            <person name="Sugawara M."/>
            <person name="Takahashi M."/>
            <person name="Kanda K."/>
            <person name="Yokoi T."/>
            <person name="Furuya T."/>
            <person name="Kikkawa E."/>
            <person name="Omura Y."/>
            <person name="Abe K."/>
            <person name="Kamihara K."/>
            <person name="Katsuta N."/>
            <person name="Sato K."/>
            <person name="Tanikawa M."/>
            <person name="Yamazaki M."/>
            <person name="Ninomiya K."/>
            <person name="Ishibashi T."/>
            <person name="Yamashita H."/>
            <person name="Murakawa K."/>
            <person name="Fujimori K."/>
            <person name="Tanai H."/>
            <person name="Kimata M."/>
            <person name="Watanabe M."/>
            <person name="Hiraoka S."/>
            <person name="Chiba Y."/>
            <person name="Ishida S."/>
            <person name="Ono Y."/>
            <person name="Takiguchi S."/>
            <person name="Watanabe S."/>
            <person name="Yosida M."/>
            <person name="Hotuta T."/>
            <person name="Kusano J."/>
            <person name="Kanehori K."/>
            <person name="Takahashi-Fujii A."/>
            <person name="Hara H."/>
            <person name="Tanase T.-O."/>
            <person name="Nomura Y."/>
            <person name="Togiya S."/>
            <person name="Komai F."/>
            <person name="Hara R."/>
            <person name="Takeuchi K."/>
            <person name="Arita M."/>
            <person name="Imose N."/>
            <person name="Musashino K."/>
            <person name="Yuuki H."/>
            <person name="Oshima A."/>
            <person name="Sasaki N."/>
            <person name="Aotsuka S."/>
            <person name="Yoshikawa Y."/>
            <person name="Matsunawa H."/>
            <person name="Ichihara T."/>
            <person name="Shiohata N."/>
            <person name="Sano S."/>
            <person name="Moriya S."/>
            <person name="Momiyama H."/>
            <person name="Satoh N."/>
            <person name="Takami S."/>
            <person name="Terashima Y."/>
            <person name="Suzuki O."/>
            <person name="Nakagawa S."/>
            <person name="Senoh A."/>
            <person name="Mizoguchi H."/>
            <person name="Goto Y."/>
            <person name="Shimizu F."/>
            <person name="Wakebe H."/>
            <person name="Hishigaki H."/>
            <person name="Watanabe T."/>
            <person name="Sugiyama A."/>
            <person name="Takemoto M."/>
            <person name="Kawakami B."/>
            <person name="Yamazaki M."/>
            <person name="Watanabe K."/>
            <person name="Kumagai A."/>
            <person name="Itakura S."/>
            <person name="Fukuzumi Y."/>
            <person name="Fujimori Y."/>
            <person name="Komiyama M."/>
            <person name="Tashiro H."/>
            <person name="Tanigami A."/>
            <person name="Fujiwara T."/>
            <person name="Ono T."/>
            <person name="Yamada K."/>
            <person name="Fujii Y."/>
            <person name="Ozaki K."/>
            <person name="Hirao M."/>
            <person name="Ohmori Y."/>
            <person name="Kawabata A."/>
            <person name="Hikiji T."/>
            <person name="Kobatake N."/>
            <person name="Inagaki H."/>
            <person name="Ikema Y."/>
            <person name="Okamoto S."/>
            <person name="Okitani R."/>
            <person name="Kawakami T."/>
            <person name="Noguchi S."/>
            <person name="Itoh T."/>
            <person name="Shigeta K."/>
            <person name="Senba T."/>
            <person name="Matsumura K."/>
            <person name="Nakajima Y."/>
            <person name="Mizuno T."/>
            <person name="Morinaga M."/>
            <person name="Sasaki M."/>
            <person name="Togashi T."/>
            <person name="Oyama M."/>
            <person name="Hata H."/>
            <person name="Watanabe M."/>
            <person name="Komatsu T."/>
            <person name="Mizushima-Sugano J."/>
            <person name="Satoh T."/>
            <person name="Shirai Y."/>
            <person name="Takahashi Y."/>
            <person name="Nakagawa K."/>
            <person name="Okumura K."/>
            <person name="Nagase T."/>
            <person name="Nomura N."/>
            <person name="Kikuchi H."/>
            <person name="Masuho Y."/>
            <person name="Yamashita R."/>
            <person name="Nakai K."/>
            <person name="Yada T."/>
            <person name="Nakamura Y."/>
            <person name="Ohara O."/>
            <person name="Isogai T."/>
            <person name="Sugano S."/>
        </authorList>
    </citation>
    <scope>NUCLEOTIDE SEQUENCE [LARGE SCALE MRNA]</scope>
    <source>
        <tissue>Hepatoma</tissue>
    </source>
</reference>
<reference key="2">
    <citation type="journal article" date="2004" name="Nature">
        <title>The DNA sequence and biology of human chromosome 19.</title>
        <authorList>
            <person name="Grimwood J."/>
            <person name="Gordon L.A."/>
            <person name="Olsen A.S."/>
            <person name="Terry A."/>
            <person name="Schmutz J."/>
            <person name="Lamerdin J.E."/>
            <person name="Hellsten U."/>
            <person name="Goodstein D."/>
            <person name="Couronne O."/>
            <person name="Tran-Gyamfi M."/>
            <person name="Aerts A."/>
            <person name="Altherr M."/>
            <person name="Ashworth L."/>
            <person name="Bajorek E."/>
            <person name="Black S."/>
            <person name="Branscomb E."/>
            <person name="Caenepeel S."/>
            <person name="Carrano A.V."/>
            <person name="Caoile C."/>
            <person name="Chan Y.M."/>
            <person name="Christensen M."/>
            <person name="Cleland C.A."/>
            <person name="Copeland A."/>
            <person name="Dalin E."/>
            <person name="Dehal P."/>
            <person name="Denys M."/>
            <person name="Detter J.C."/>
            <person name="Escobar J."/>
            <person name="Flowers D."/>
            <person name="Fotopulos D."/>
            <person name="Garcia C."/>
            <person name="Georgescu A.M."/>
            <person name="Glavina T."/>
            <person name="Gomez M."/>
            <person name="Gonzales E."/>
            <person name="Groza M."/>
            <person name="Hammon N."/>
            <person name="Hawkins T."/>
            <person name="Haydu L."/>
            <person name="Ho I."/>
            <person name="Huang W."/>
            <person name="Israni S."/>
            <person name="Jett J."/>
            <person name="Kadner K."/>
            <person name="Kimball H."/>
            <person name="Kobayashi A."/>
            <person name="Larionov V."/>
            <person name="Leem S.-H."/>
            <person name="Lopez F."/>
            <person name="Lou Y."/>
            <person name="Lowry S."/>
            <person name="Malfatti S."/>
            <person name="Martinez D."/>
            <person name="McCready P.M."/>
            <person name="Medina C."/>
            <person name="Morgan J."/>
            <person name="Nelson K."/>
            <person name="Nolan M."/>
            <person name="Ovcharenko I."/>
            <person name="Pitluck S."/>
            <person name="Pollard M."/>
            <person name="Popkie A.P."/>
            <person name="Predki P."/>
            <person name="Quan G."/>
            <person name="Ramirez L."/>
            <person name="Rash S."/>
            <person name="Retterer J."/>
            <person name="Rodriguez A."/>
            <person name="Rogers S."/>
            <person name="Salamov A."/>
            <person name="Salazar A."/>
            <person name="She X."/>
            <person name="Smith D."/>
            <person name="Slezak T."/>
            <person name="Solovyev V."/>
            <person name="Thayer N."/>
            <person name="Tice H."/>
            <person name="Tsai M."/>
            <person name="Ustaszewska A."/>
            <person name="Vo N."/>
            <person name="Wagner M."/>
            <person name="Wheeler J."/>
            <person name="Wu K."/>
            <person name="Xie G."/>
            <person name="Yang J."/>
            <person name="Dubchak I."/>
            <person name="Furey T.S."/>
            <person name="DeJong P."/>
            <person name="Dickson M."/>
            <person name="Gordon D."/>
            <person name="Eichler E.E."/>
            <person name="Pennacchio L.A."/>
            <person name="Richardson P."/>
            <person name="Stubbs L."/>
            <person name="Rokhsar D.S."/>
            <person name="Myers R.M."/>
            <person name="Rubin E.M."/>
            <person name="Lucas S.M."/>
        </authorList>
    </citation>
    <scope>NUCLEOTIDE SEQUENCE [LARGE SCALE GENOMIC DNA]</scope>
</reference>
<reference key="3">
    <citation type="journal article" date="2004" name="Genome Res.">
        <title>The status, quality, and expansion of the NIH full-length cDNA project: the Mammalian Gene Collection (MGC).</title>
        <authorList>
            <consortium name="The MGC Project Team"/>
        </authorList>
    </citation>
    <scope>NUCLEOTIDE SEQUENCE [LARGE SCALE MRNA] OF 62-75</scope>
    <source>
        <tissue>Lung</tissue>
    </source>
</reference>
<reference key="4">
    <citation type="journal article" date="2011" name="BMC Syst. Biol.">
        <title>Initial characterization of the human central proteome.</title>
        <authorList>
            <person name="Burkard T.R."/>
            <person name="Planyavsky M."/>
            <person name="Kaupe I."/>
            <person name="Breitwieser F.P."/>
            <person name="Buerckstuemmer T."/>
            <person name="Bennett K.L."/>
            <person name="Superti-Furga G."/>
            <person name="Colinge J."/>
        </authorList>
    </citation>
    <scope>IDENTIFICATION BY MASS SPECTROMETRY [LARGE SCALE ANALYSIS]</scope>
</reference>
<name>SMIM7_HUMAN</name>
<accession>Q9BQ49</accession>
<accession>A8MX44</accession>
<evidence type="ECO:0000255" key="1"/>
<evidence type="ECO:0000305" key="2"/>
<sequence length="75" mass="8631">MIGDILLFGTLLMNAGAVLNFKLKKKDTQGFGEESREPSTGDNIREFLLSLRYFRIFIALWNIFMMFCMIVLFGS</sequence>
<feature type="signal peptide" evidence="1">
    <location>
        <begin position="1"/>
        <end position="17"/>
    </location>
</feature>
<feature type="chain" id="PRO_0000284047" description="Small integral membrane protein 7">
    <location>
        <begin position="18"/>
        <end position="75"/>
    </location>
</feature>
<feature type="topological domain" description="Extracellular" evidence="1">
    <location>
        <begin position="18"/>
        <end position="53"/>
    </location>
</feature>
<feature type="transmembrane region" description="Helical" evidence="1">
    <location>
        <begin position="54"/>
        <end position="74"/>
    </location>
</feature>
<feature type="topological domain" description="Cytoplasmic" evidence="1">
    <location>
        <position position="75"/>
    </location>
</feature>
<keyword id="KW-0472">Membrane</keyword>
<keyword id="KW-1267">Proteomics identification</keyword>
<keyword id="KW-1185">Reference proteome</keyword>
<keyword id="KW-0732">Signal</keyword>
<keyword id="KW-0812">Transmembrane</keyword>
<keyword id="KW-1133">Transmembrane helix</keyword>
<proteinExistence type="evidence at protein level"/>
<dbReference type="EMBL" id="AK025602">
    <property type="status" value="NOT_ANNOTATED_CDS"/>
    <property type="molecule type" value="mRNA"/>
</dbReference>
<dbReference type="EMBL" id="AC024075">
    <property type="status" value="NOT_ANNOTATED_CDS"/>
    <property type="molecule type" value="Genomic_DNA"/>
</dbReference>
<dbReference type="EMBL" id="BC001680">
    <property type="status" value="NOT_ANNOTATED_CDS"/>
    <property type="molecule type" value="mRNA"/>
</dbReference>
<dbReference type="EMBL" id="BC001948">
    <property type="status" value="NOT_ANNOTATED_CDS"/>
    <property type="molecule type" value="mRNA"/>
</dbReference>
<dbReference type="CCDS" id="CCDS12348.2"/>
<dbReference type="RefSeq" id="NP_077009.2">
    <property type="nucleotide sequence ID" value="NM_024104.4"/>
</dbReference>
<dbReference type="RefSeq" id="XP_047295371.1">
    <property type="nucleotide sequence ID" value="XM_047439415.1"/>
</dbReference>
<dbReference type="RefSeq" id="XP_047295372.1">
    <property type="nucleotide sequence ID" value="XM_047439416.1"/>
</dbReference>
<dbReference type="RefSeq" id="XP_047295373.1">
    <property type="nucleotide sequence ID" value="XM_047439417.1"/>
</dbReference>
<dbReference type="RefSeq" id="XP_047295374.1">
    <property type="nucleotide sequence ID" value="XM_047439418.1"/>
</dbReference>
<dbReference type="RefSeq" id="XP_054178089.1">
    <property type="nucleotide sequence ID" value="XM_054322114.1"/>
</dbReference>
<dbReference type="BioGRID" id="122534">
    <property type="interactions" value="4"/>
</dbReference>
<dbReference type="FunCoup" id="Q9BQ49">
    <property type="interactions" value="639"/>
</dbReference>
<dbReference type="IntAct" id="Q9BQ49">
    <property type="interactions" value="2"/>
</dbReference>
<dbReference type="MINT" id="Q9BQ49"/>
<dbReference type="STRING" id="9606.ENSP00000486146"/>
<dbReference type="iPTMnet" id="Q9BQ49"/>
<dbReference type="PhosphoSitePlus" id="Q9BQ49"/>
<dbReference type="SwissPalm" id="Q9BQ49"/>
<dbReference type="BioMuta" id="SMIM7"/>
<dbReference type="DMDM" id="193806332"/>
<dbReference type="jPOST" id="Q9BQ49"/>
<dbReference type="MassIVE" id="Q9BQ49"/>
<dbReference type="PaxDb" id="9606-ENSP00000351569"/>
<dbReference type="PeptideAtlas" id="Q9BQ49"/>
<dbReference type="ProteomicsDB" id="78621"/>
<dbReference type="Pumba" id="Q9BQ49"/>
<dbReference type="TopDownProteomics" id="Q9BQ49"/>
<dbReference type="Antibodypedia" id="27426">
    <property type="antibodies" value="12 antibodies from 7 providers"/>
</dbReference>
<dbReference type="DNASU" id="79086"/>
<dbReference type="Ensembl" id="ENST00000481671.6">
    <property type="protein sequence ID" value="ENSP00000433833.1"/>
    <property type="gene ID" value="ENSG00000214046.9"/>
</dbReference>
<dbReference type="Ensembl" id="ENST00000487416.7">
    <property type="protein sequence ID" value="ENSP00000417147.1"/>
    <property type="gene ID" value="ENSG00000214046.9"/>
</dbReference>
<dbReference type="Ensembl" id="ENST00000593404.5">
    <property type="protein sequence ID" value="ENSP00000471355.1"/>
    <property type="gene ID" value="ENSG00000214046.9"/>
</dbReference>
<dbReference type="Ensembl" id="ENST00000593409.5">
    <property type="protein sequence ID" value="ENSP00000469962.1"/>
    <property type="gene ID" value="ENSG00000214046.9"/>
</dbReference>
<dbReference type="Ensembl" id="ENST00000597781.5">
    <property type="protein sequence ID" value="ENSP00000469440.1"/>
    <property type="gene ID" value="ENSG00000214046.9"/>
</dbReference>
<dbReference type="Ensembl" id="ENST00000599310.5">
    <property type="protein sequence ID" value="ENSP00000469918.1"/>
    <property type="gene ID" value="ENSG00000214046.9"/>
</dbReference>
<dbReference type="GeneID" id="79086"/>
<dbReference type="KEGG" id="hsa:79086"/>
<dbReference type="MANE-Select" id="ENST00000487416.7">
    <property type="protein sequence ID" value="ENSP00000417147.1"/>
    <property type="RefSeq nucleotide sequence ID" value="NM_024104.4"/>
    <property type="RefSeq protein sequence ID" value="NP_077009.2"/>
</dbReference>
<dbReference type="UCSC" id="uc002ner.4">
    <property type="organism name" value="human"/>
</dbReference>
<dbReference type="AGR" id="HGNC:28419"/>
<dbReference type="CTD" id="79086"/>
<dbReference type="GeneCards" id="SMIM7"/>
<dbReference type="HGNC" id="HGNC:28419">
    <property type="gene designation" value="SMIM7"/>
</dbReference>
<dbReference type="HPA" id="ENSG00000214046">
    <property type="expression patterns" value="Low tissue specificity"/>
</dbReference>
<dbReference type="neXtProt" id="NX_Q9BQ49"/>
<dbReference type="OpenTargets" id="ENSG00000214046"/>
<dbReference type="PharmGKB" id="PA144596475"/>
<dbReference type="VEuPathDB" id="HostDB:ENSG00000214046"/>
<dbReference type="eggNOG" id="ENOG502S4E0">
    <property type="taxonomic scope" value="Eukaryota"/>
</dbReference>
<dbReference type="GeneTree" id="ENSGT00390000014626"/>
<dbReference type="HOGENOM" id="CLU_181165_0_0_1"/>
<dbReference type="InParanoid" id="Q9BQ49"/>
<dbReference type="OMA" id="LWNILVM"/>
<dbReference type="OrthoDB" id="10047572at2759"/>
<dbReference type="PAN-GO" id="Q9BQ49">
    <property type="GO annotations" value="0 GO annotations based on evolutionary models"/>
</dbReference>
<dbReference type="PhylomeDB" id="Q9BQ49"/>
<dbReference type="TreeFam" id="TF332999"/>
<dbReference type="PathwayCommons" id="Q9BQ49"/>
<dbReference type="SignaLink" id="Q9BQ49"/>
<dbReference type="BioGRID-ORCS" id="79086">
    <property type="hits" value="36 hits in 1142 CRISPR screens"/>
</dbReference>
<dbReference type="ChiTaRS" id="SMIM7">
    <property type="organism name" value="human"/>
</dbReference>
<dbReference type="GenomeRNAi" id="79086"/>
<dbReference type="Pharos" id="Q9BQ49">
    <property type="development level" value="Tdark"/>
</dbReference>
<dbReference type="PRO" id="PR:Q9BQ49"/>
<dbReference type="Proteomes" id="UP000005640">
    <property type="component" value="Chromosome 19"/>
</dbReference>
<dbReference type="RNAct" id="Q9BQ49">
    <property type="molecule type" value="protein"/>
</dbReference>
<dbReference type="Bgee" id="ENSG00000214046">
    <property type="expression patterns" value="Expressed in islet of Langerhans and 208 other cell types or tissues"/>
</dbReference>
<dbReference type="ExpressionAtlas" id="Q9BQ49">
    <property type="expression patterns" value="baseline and differential"/>
</dbReference>
<dbReference type="GO" id="GO:0016020">
    <property type="term" value="C:membrane"/>
    <property type="evidence" value="ECO:0007669"/>
    <property type="project" value="UniProtKB-SubCell"/>
</dbReference>
<dbReference type="InterPro" id="IPR037659">
    <property type="entry name" value="SMIM7"/>
</dbReference>
<dbReference type="PANTHER" id="PTHR28622">
    <property type="entry name" value="SMALL INTEGRAL MEMBRANE PROTEIN 7"/>
    <property type="match status" value="1"/>
</dbReference>
<dbReference type="PANTHER" id="PTHR28622:SF1">
    <property type="entry name" value="SMALL INTEGRAL MEMBRANE PROTEIN 7"/>
    <property type="match status" value="1"/>
</dbReference>
<organism>
    <name type="scientific">Homo sapiens</name>
    <name type="common">Human</name>
    <dbReference type="NCBI Taxonomy" id="9606"/>
    <lineage>
        <taxon>Eukaryota</taxon>
        <taxon>Metazoa</taxon>
        <taxon>Chordata</taxon>
        <taxon>Craniata</taxon>
        <taxon>Vertebrata</taxon>
        <taxon>Euteleostomi</taxon>
        <taxon>Mammalia</taxon>
        <taxon>Eutheria</taxon>
        <taxon>Euarchontoglires</taxon>
        <taxon>Primates</taxon>
        <taxon>Haplorrhini</taxon>
        <taxon>Catarrhini</taxon>
        <taxon>Hominidae</taxon>
        <taxon>Homo</taxon>
    </lineage>
</organism>